<sequence>MFIPKKTKYKKDFKGRISGNAKGGYTLSFGSHGLKALEPSRLTSKQIESARRSISRTLKRVGKVWIRAFCHTSVSKKPMDVRMGKGKGSVEMWVCKVKPGKILFEIGGVPLNLAREALNKAQAKLPMKCKFVSDEL</sequence>
<reference key="1">
    <citation type="journal article" date="2006" name="PLoS Genet.">
        <title>Comparative genomics of emerging human ehrlichiosis agents.</title>
        <authorList>
            <person name="Dunning Hotopp J.C."/>
            <person name="Lin M."/>
            <person name="Madupu R."/>
            <person name="Crabtree J."/>
            <person name="Angiuoli S.V."/>
            <person name="Eisen J.A."/>
            <person name="Seshadri R."/>
            <person name="Ren Q."/>
            <person name="Wu M."/>
            <person name="Utterback T.R."/>
            <person name="Smith S."/>
            <person name="Lewis M."/>
            <person name="Khouri H."/>
            <person name="Zhang C."/>
            <person name="Niu H."/>
            <person name="Lin Q."/>
            <person name="Ohashi N."/>
            <person name="Zhi N."/>
            <person name="Nelson W.C."/>
            <person name="Brinkac L.M."/>
            <person name="Dodson R.J."/>
            <person name="Rosovitz M.J."/>
            <person name="Sundaram J.P."/>
            <person name="Daugherty S.C."/>
            <person name="Davidsen T."/>
            <person name="Durkin A.S."/>
            <person name="Gwinn M.L."/>
            <person name="Haft D.H."/>
            <person name="Selengut J.D."/>
            <person name="Sullivan S.A."/>
            <person name="Zafar N."/>
            <person name="Zhou L."/>
            <person name="Benahmed F."/>
            <person name="Forberger H."/>
            <person name="Halpin R."/>
            <person name="Mulligan S."/>
            <person name="Robinson J."/>
            <person name="White O."/>
            <person name="Rikihisa Y."/>
            <person name="Tettelin H."/>
        </authorList>
    </citation>
    <scope>NUCLEOTIDE SEQUENCE [LARGE SCALE GENOMIC DNA]</scope>
    <source>
        <strain>ATCC CRL-10679 / Arkansas</strain>
    </source>
</reference>
<feature type="chain" id="PRO_0000251632" description="Large ribosomal subunit protein uL16">
    <location>
        <begin position="1"/>
        <end position="136"/>
    </location>
</feature>
<gene>
    <name evidence="1" type="primary">rplP</name>
    <name type="ordered locus">ECH_0416</name>
</gene>
<organism>
    <name type="scientific">Ehrlichia chaffeensis (strain ATCC CRL-10679 / Arkansas)</name>
    <dbReference type="NCBI Taxonomy" id="205920"/>
    <lineage>
        <taxon>Bacteria</taxon>
        <taxon>Pseudomonadati</taxon>
        <taxon>Pseudomonadota</taxon>
        <taxon>Alphaproteobacteria</taxon>
        <taxon>Rickettsiales</taxon>
        <taxon>Anaplasmataceae</taxon>
        <taxon>Ehrlichia</taxon>
    </lineage>
</organism>
<evidence type="ECO:0000255" key="1">
    <source>
        <dbReference type="HAMAP-Rule" id="MF_01342"/>
    </source>
</evidence>
<evidence type="ECO:0000305" key="2"/>
<comment type="function">
    <text evidence="1">Binds 23S rRNA and is also seen to make contacts with the A and possibly P site tRNAs.</text>
</comment>
<comment type="subunit">
    <text evidence="1">Part of the 50S ribosomal subunit.</text>
</comment>
<comment type="similarity">
    <text evidence="1">Belongs to the universal ribosomal protein uL16 family.</text>
</comment>
<protein>
    <recommendedName>
        <fullName evidence="1">Large ribosomal subunit protein uL16</fullName>
    </recommendedName>
    <alternativeName>
        <fullName evidence="2">50S ribosomal protein L16</fullName>
    </alternativeName>
</protein>
<proteinExistence type="inferred from homology"/>
<accession>Q2GH49</accession>
<keyword id="KW-1185">Reference proteome</keyword>
<keyword id="KW-0687">Ribonucleoprotein</keyword>
<keyword id="KW-0689">Ribosomal protein</keyword>
<keyword id="KW-0694">RNA-binding</keyword>
<keyword id="KW-0699">rRNA-binding</keyword>
<keyword id="KW-0820">tRNA-binding</keyword>
<dbReference type="EMBL" id="CP000236">
    <property type="protein sequence ID" value="ABD44939.1"/>
    <property type="molecule type" value="Genomic_DNA"/>
</dbReference>
<dbReference type="RefSeq" id="WP_011452583.1">
    <property type="nucleotide sequence ID" value="NC_007799.1"/>
</dbReference>
<dbReference type="SMR" id="Q2GH49"/>
<dbReference type="STRING" id="205920.ECH_0416"/>
<dbReference type="KEGG" id="ech:ECH_0416"/>
<dbReference type="eggNOG" id="COG0197">
    <property type="taxonomic scope" value="Bacteria"/>
</dbReference>
<dbReference type="HOGENOM" id="CLU_078858_2_1_5"/>
<dbReference type="OrthoDB" id="9802589at2"/>
<dbReference type="Proteomes" id="UP000008320">
    <property type="component" value="Chromosome"/>
</dbReference>
<dbReference type="GO" id="GO:0022625">
    <property type="term" value="C:cytosolic large ribosomal subunit"/>
    <property type="evidence" value="ECO:0007669"/>
    <property type="project" value="TreeGrafter"/>
</dbReference>
<dbReference type="GO" id="GO:0019843">
    <property type="term" value="F:rRNA binding"/>
    <property type="evidence" value="ECO:0007669"/>
    <property type="project" value="UniProtKB-UniRule"/>
</dbReference>
<dbReference type="GO" id="GO:0003735">
    <property type="term" value="F:structural constituent of ribosome"/>
    <property type="evidence" value="ECO:0007669"/>
    <property type="project" value="InterPro"/>
</dbReference>
<dbReference type="GO" id="GO:0000049">
    <property type="term" value="F:tRNA binding"/>
    <property type="evidence" value="ECO:0007669"/>
    <property type="project" value="UniProtKB-KW"/>
</dbReference>
<dbReference type="GO" id="GO:0006412">
    <property type="term" value="P:translation"/>
    <property type="evidence" value="ECO:0007669"/>
    <property type="project" value="UniProtKB-UniRule"/>
</dbReference>
<dbReference type="CDD" id="cd01433">
    <property type="entry name" value="Ribosomal_L16_L10e"/>
    <property type="match status" value="1"/>
</dbReference>
<dbReference type="FunFam" id="3.90.1170.10:FF:000001">
    <property type="entry name" value="50S ribosomal protein L16"/>
    <property type="match status" value="1"/>
</dbReference>
<dbReference type="Gene3D" id="3.90.1170.10">
    <property type="entry name" value="Ribosomal protein L10e/L16"/>
    <property type="match status" value="1"/>
</dbReference>
<dbReference type="HAMAP" id="MF_01342">
    <property type="entry name" value="Ribosomal_uL16"/>
    <property type="match status" value="1"/>
</dbReference>
<dbReference type="InterPro" id="IPR047873">
    <property type="entry name" value="Ribosomal_uL16"/>
</dbReference>
<dbReference type="InterPro" id="IPR000114">
    <property type="entry name" value="Ribosomal_uL16_bact-type"/>
</dbReference>
<dbReference type="InterPro" id="IPR020798">
    <property type="entry name" value="Ribosomal_uL16_CS"/>
</dbReference>
<dbReference type="InterPro" id="IPR016180">
    <property type="entry name" value="Ribosomal_uL16_dom"/>
</dbReference>
<dbReference type="InterPro" id="IPR036920">
    <property type="entry name" value="Ribosomal_uL16_sf"/>
</dbReference>
<dbReference type="NCBIfam" id="TIGR01164">
    <property type="entry name" value="rplP_bact"/>
    <property type="match status" value="1"/>
</dbReference>
<dbReference type="PANTHER" id="PTHR12220">
    <property type="entry name" value="50S/60S RIBOSOMAL PROTEIN L16"/>
    <property type="match status" value="1"/>
</dbReference>
<dbReference type="PANTHER" id="PTHR12220:SF13">
    <property type="entry name" value="LARGE RIBOSOMAL SUBUNIT PROTEIN UL16M"/>
    <property type="match status" value="1"/>
</dbReference>
<dbReference type="Pfam" id="PF00252">
    <property type="entry name" value="Ribosomal_L16"/>
    <property type="match status" value="1"/>
</dbReference>
<dbReference type="PRINTS" id="PR00060">
    <property type="entry name" value="RIBOSOMALL16"/>
</dbReference>
<dbReference type="SUPFAM" id="SSF54686">
    <property type="entry name" value="Ribosomal protein L16p/L10e"/>
    <property type="match status" value="1"/>
</dbReference>
<dbReference type="PROSITE" id="PS00701">
    <property type="entry name" value="RIBOSOMAL_L16_2"/>
    <property type="match status" value="1"/>
</dbReference>
<name>RL16_EHRCR</name>